<dbReference type="EMBL" id="AB004690">
    <property type="protein sequence ID" value="BAA20458.1"/>
    <property type="molecule type" value="Genomic_DNA"/>
</dbReference>
<dbReference type="EMBL" id="CU329670">
    <property type="protein sequence ID" value="CAA22614.1"/>
    <property type="molecule type" value="Genomic_DNA"/>
</dbReference>
<dbReference type="PIR" id="T37763">
    <property type="entry name" value="T37763"/>
</dbReference>
<dbReference type="RefSeq" id="NP_593139.1">
    <property type="nucleotide sequence ID" value="NM_001018535.2"/>
</dbReference>
<dbReference type="SMR" id="P87227"/>
<dbReference type="BioGRID" id="278771">
    <property type="interactions" value="48"/>
</dbReference>
<dbReference type="FunCoup" id="P87227">
    <property type="interactions" value="11"/>
</dbReference>
<dbReference type="IntAct" id="P87227">
    <property type="interactions" value="4"/>
</dbReference>
<dbReference type="STRING" id="284812.P87227"/>
<dbReference type="PaxDb" id="4896-SPAC1687.20c.1"/>
<dbReference type="EnsemblFungi" id="SPAC1687.20c.1">
    <property type="protein sequence ID" value="SPAC1687.20c.1:pep"/>
    <property type="gene ID" value="SPAC1687.20c"/>
</dbReference>
<dbReference type="GeneID" id="2542304"/>
<dbReference type="KEGG" id="spo:2542304"/>
<dbReference type="PomBase" id="SPAC1687.20c">
    <property type="gene designation" value="mis6"/>
</dbReference>
<dbReference type="VEuPathDB" id="FungiDB:SPAC1687.20c"/>
<dbReference type="eggNOG" id="ENOG502QU9H">
    <property type="taxonomic scope" value="Eukaryota"/>
</dbReference>
<dbReference type="HOGENOM" id="CLU_408895_0_0_1"/>
<dbReference type="InParanoid" id="P87227"/>
<dbReference type="OMA" id="QDGIEWI"/>
<dbReference type="PhylomeDB" id="P87227"/>
<dbReference type="PRO" id="PR:P87227"/>
<dbReference type="Proteomes" id="UP000002485">
    <property type="component" value="Chromosome I"/>
</dbReference>
<dbReference type="GO" id="GO:0034506">
    <property type="term" value="C:chromosome, centromeric core domain"/>
    <property type="evidence" value="ECO:0000314"/>
    <property type="project" value="PomBase"/>
</dbReference>
<dbReference type="GO" id="GO:0000775">
    <property type="term" value="C:chromosome, centromeric region"/>
    <property type="evidence" value="ECO:0000314"/>
    <property type="project" value="PomBase"/>
</dbReference>
<dbReference type="GO" id="GO:0000779">
    <property type="term" value="C:condensed chromosome, centromeric region"/>
    <property type="evidence" value="ECO:0000314"/>
    <property type="project" value="PomBase"/>
</dbReference>
<dbReference type="GO" id="GO:0000939">
    <property type="term" value="C:inner kinetochore"/>
    <property type="evidence" value="ECO:0000314"/>
    <property type="project" value="PomBase"/>
</dbReference>
<dbReference type="GO" id="GO:0000776">
    <property type="term" value="C:kinetochore"/>
    <property type="evidence" value="ECO:0000314"/>
    <property type="project" value="PomBase"/>
</dbReference>
<dbReference type="GO" id="GO:0031511">
    <property type="term" value="C:Mis6-Sim4 complex"/>
    <property type="evidence" value="ECO:0000314"/>
    <property type="project" value="PomBase"/>
</dbReference>
<dbReference type="GO" id="GO:0005634">
    <property type="term" value="C:nucleus"/>
    <property type="evidence" value="ECO:0000305"/>
    <property type="project" value="PomBase"/>
</dbReference>
<dbReference type="GO" id="GO:0051301">
    <property type="term" value="P:cell division"/>
    <property type="evidence" value="ECO:0007669"/>
    <property type="project" value="UniProtKB-KW"/>
</dbReference>
<dbReference type="GO" id="GO:0034080">
    <property type="term" value="P:CENP-A containing chromatin assembly"/>
    <property type="evidence" value="ECO:0000315"/>
    <property type="project" value="PomBase"/>
</dbReference>
<dbReference type="GO" id="GO:0000070">
    <property type="term" value="P:mitotic sister chromatid segregation"/>
    <property type="evidence" value="ECO:0000315"/>
    <property type="project" value="PomBase"/>
</dbReference>
<dbReference type="CDD" id="cd22647">
    <property type="entry name" value="CTF3_NTD_HEAT"/>
    <property type="match status" value="1"/>
</dbReference>
<dbReference type="InterPro" id="IPR012485">
    <property type="entry name" value="CENP-I"/>
</dbReference>
<dbReference type="PANTHER" id="PTHR48208">
    <property type="entry name" value="CENTROMERE PROTEIN I"/>
    <property type="match status" value="1"/>
</dbReference>
<dbReference type="PANTHER" id="PTHR48208:SF2">
    <property type="entry name" value="CENTROMERE PROTEIN I"/>
    <property type="match status" value="1"/>
</dbReference>
<dbReference type="Pfam" id="PF07778">
    <property type="entry name" value="CENP-I"/>
    <property type="match status" value="1"/>
</dbReference>
<sequence length="672" mass="78513">MESFENKGFLDIEEGIQWIKKNSENLSSSKKTILARLQQFHKLCSEVGLNQHSISSLLDVILSKKTHFDKNHVQLLIKCLYPNELISQTIAIRIISSLDPHGLRCSYAIQAKLLNWLIHVYEFLDGNNLLCRYYGVLFHFLDFLTLRPYISNLLVLLTKHYHVKSFRIHQLLALYQKPGNTADPYLLALILTYKQHFPDVIVGSYTYRKHGSVRLDSEWIAATKAILNRQSEDVPLETWSSEKRKRQSSLIPDLITMKNTSSSYSLEELTSVQQMGLVYEKIVFPSRIAAVLKSKLFLIFLFLKNKNVYYSRLDEWLHITLNYGLALRSGSNNQEEEVLHLLYKYLLFSPKFPKSLLQYVITFFSKPNITEENYNLLTLLVTHIPITTDSSYFNSLLKEFEQFILQKNAEFCSKHLNILWLWLFRMLNLRIASMGNNHTLLEKCLLITNHATFLVSHFSWDVSLAYQLSRLFQLYYKILTKIRKQIEPNIPPKELIYVLFFQPSAFYINSMVGLLLLTKNYQERLMDSRIDAISKFTHSYLKSLSEIILLKEKRAILSFLQLWEPFKSDYSQFLPIATRIANDHPYAQRVFSLTCAPQFFSYINGYQIYLQQTNPATGSIPLKPIQEETFGAFQSNLHLSDSWEDFQKNFIIYLKKKGYLAISDFLLSTLNR</sequence>
<comment type="function">
    <text evidence="1 2">Component of the kinetochore, a multiprotein complex that assembles on centromeric DNA and attaches chromosomes to spindle microtubules, mediating chromosome segregation and sister chromatid segregation during meiosis and mitosis. Component of the inner kinetochore constitutive centromere-associated network (CCAN), which serves as a structural platform for outer kinetochore assembly (PubMed:10398680). Required for the localization of cnp1 to the centromere (PubMed:10864871).</text>
</comment>
<comment type="subunit">
    <text evidence="2 3 4 5">Component of the inner kinetochore constitutive centromere-associated network (CCAN) (also known as central kinetochore Sim4 complex in fission yeast), which is composed of at least cnl2, cnp3, cnp20, fta1, fta2, fta3, fta4, fta6, fta7, mal2, mhf1, mhf2, mis6, mis15, mis17, sim4 and wip1 (PubMed:16079914). Interacts with cnp1, sim4, mis15 and mis17 (PubMed:10864871, PubMed:12719471, PubMed:15369671).</text>
</comment>
<comment type="interaction">
    <interactant intactId="EBI-1148555">
        <id>P87227</id>
    </interactant>
    <interactant intactId="EBI-1148540">
        <id>O94494</id>
        <label>sim4</label>
    </interactant>
    <organismsDiffer>false</organismsDiffer>
    <experiments>5</experiments>
</comment>
<comment type="subcellular location">
    <subcellularLocation>
        <location evidence="6">Nucleus</location>
    </subcellularLocation>
    <subcellularLocation>
        <location evidence="6">Chromosome</location>
        <location evidence="6">Centromere</location>
    </subcellularLocation>
</comment>
<comment type="similarity">
    <text evidence="7">Belongs to the CENP-I/CTF3 family.</text>
</comment>
<proteinExistence type="evidence at protein level"/>
<gene>
    <name type="primary">mis6</name>
    <name type="ORF">SPAC1687.20c</name>
</gene>
<name>CENPI_SCHPO</name>
<protein>
    <recommendedName>
        <fullName>Inner kinetochore subunit mis6</fullName>
    </recommendedName>
    <alternativeName>
        <fullName>CENP-I homolog</fullName>
    </alternativeName>
    <alternativeName>
        <fullName>Constitutive centromere-associated network protein mis6</fullName>
    </alternativeName>
    <alternativeName>
        <fullName>Sim4 complex subunit mis6</fullName>
    </alternativeName>
</protein>
<evidence type="ECO:0000269" key="1">
    <source>
    </source>
</evidence>
<evidence type="ECO:0000269" key="2">
    <source>
    </source>
</evidence>
<evidence type="ECO:0000269" key="3">
    <source>
    </source>
</evidence>
<evidence type="ECO:0000269" key="4">
    <source>
    </source>
</evidence>
<evidence type="ECO:0000269" key="5">
    <source>
    </source>
</evidence>
<evidence type="ECO:0000269" key="6">
    <source>
    </source>
</evidence>
<evidence type="ECO:0000305" key="7"/>
<feature type="chain" id="PRO_0000096493" description="Inner kinetochore subunit mis6">
    <location>
        <begin position="1"/>
        <end position="672"/>
    </location>
</feature>
<accession>P87227</accession>
<organism>
    <name type="scientific">Schizosaccharomyces pombe (strain 972 / ATCC 24843)</name>
    <name type="common">Fission yeast</name>
    <dbReference type="NCBI Taxonomy" id="284812"/>
    <lineage>
        <taxon>Eukaryota</taxon>
        <taxon>Fungi</taxon>
        <taxon>Dikarya</taxon>
        <taxon>Ascomycota</taxon>
        <taxon>Taphrinomycotina</taxon>
        <taxon>Schizosaccharomycetes</taxon>
        <taxon>Schizosaccharomycetales</taxon>
        <taxon>Schizosaccharomycetaceae</taxon>
        <taxon>Schizosaccharomyces</taxon>
    </lineage>
</organism>
<reference key="1">
    <citation type="journal article" date="1997" name="Cell">
        <title>Mis6, a fission yeast inner centromere protein, acts during G1/S and forms specialized chromatin required for equal segregation.</title>
        <authorList>
            <person name="Saitoh S."/>
            <person name="Takahashi K."/>
            <person name="Yanagida M."/>
        </authorList>
    </citation>
    <scope>NUCLEOTIDE SEQUENCE [GENOMIC DNA]</scope>
    <source>
        <strain>972 / ATCC 24843</strain>
    </source>
</reference>
<reference key="2">
    <citation type="journal article" date="2002" name="Nature">
        <title>The genome sequence of Schizosaccharomyces pombe.</title>
        <authorList>
            <person name="Wood V."/>
            <person name="Gwilliam R."/>
            <person name="Rajandream M.A."/>
            <person name="Lyne M.H."/>
            <person name="Lyne R."/>
            <person name="Stewart A."/>
            <person name="Sgouros J.G."/>
            <person name="Peat N."/>
            <person name="Hayles J."/>
            <person name="Baker S.G."/>
            <person name="Basham D."/>
            <person name="Bowman S."/>
            <person name="Brooks K."/>
            <person name="Brown D."/>
            <person name="Brown S."/>
            <person name="Chillingworth T."/>
            <person name="Churcher C.M."/>
            <person name="Collins M."/>
            <person name="Connor R."/>
            <person name="Cronin A."/>
            <person name="Davis P."/>
            <person name="Feltwell T."/>
            <person name="Fraser A."/>
            <person name="Gentles S."/>
            <person name="Goble A."/>
            <person name="Hamlin N."/>
            <person name="Harris D.E."/>
            <person name="Hidalgo J."/>
            <person name="Hodgson G."/>
            <person name="Holroyd S."/>
            <person name="Hornsby T."/>
            <person name="Howarth S."/>
            <person name="Huckle E.J."/>
            <person name="Hunt S."/>
            <person name="Jagels K."/>
            <person name="James K.D."/>
            <person name="Jones L."/>
            <person name="Jones M."/>
            <person name="Leather S."/>
            <person name="McDonald S."/>
            <person name="McLean J."/>
            <person name="Mooney P."/>
            <person name="Moule S."/>
            <person name="Mungall K.L."/>
            <person name="Murphy L.D."/>
            <person name="Niblett D."/>
            <person name="Odell C."/>
            <person name="Oliver K."/>
            <person name="O'Neil S."/>
            <person name="Pearson D."/>
            <person name="Quail M.A."/>
            <person name="Rabbinowitsch E."/>
            <person name="Rutherford K.M."/>
            <person name="Rutter S."/>
            <person name="Saunders D."/>
            <person name="Seeger K."/>
            <person name="Sharp S."/>
            <person name="Skelton J."/>
            <person name="Simmonds M.N."/>
            <person name="Squares R."/>
            <person name="Squares S."/>
            <person name="Stevens K."/>
            <person name="Taylor K."/>
            <person name="Taylor R.G."/>
            <person name="Tivey A."/>
            <person name="Walsh S.V."/>
            <person name="Warren T."/>
            <person name="Whitehead S."/>
            <person name="Woodward J.R."/>
            <person name="Volckaert G."/>
            <person name="Aert R."/>
            <person name="Robben J."/>
            <person name="Grymonprez B."/>
            <person name="Weltjens I."/>
            <person name="Vanstreels E."/>
            <person name="Rieger M."/>
            <person name="Schaefer M."/>
            <person name="Mueller-Auer S."/>
            <person name="Gabel C."/>
            <person name="Fuchs M."/>
            <person name="Duesterhoeft A."/>
            <person name="Fritzc C."/>
            <person name="Holzer E."/>
            <person name="Moestl D."/>
            <person name="Hilbert H."/>
            <person name="Borzym K."/>
            <person name="Langer I."/>
            <person name="Beck A."/>
            <person name="Lehrach H."/>
            <person name="Reinhardt R."/>
            <person name="Pohl T.M."/>
            <person name="Eger P."/>
            <person name="Zimmermann W."/>
            <person name="Wedler H."/>
            <person name="Wambutt R."/>
            <person name="Purnelle B."/>
            <person name="Goffeau A."/>
            <person name="Cadieu E."/>
            <person name="Dreano S."/>
            <person name="Gloux S."/>
            <person name="Lelaure V."/>
            <person name="Mottier S."/>
            <person name="Galibert F."/>
            <person name="Aves S.J."/>
            <person name="Xiang Z."/>
            <person name="Hunt C."/>
            <person name="Moore K."/>
            <person name="Hurst S.M."/>
            <person name="Lucas M."/>
            <person name="Rochet M."/>
            <person name="Gaillardin C."/>
            <person name="Tallada V.A."/>
            <person name="Garzon A."/>
            <person name="Thode G."/>
            <person name="Daga R.R."/>
            <person name="Cruzado L."/>
            <person name="Jimenez J."/>
            <person name="Sanchez M."/>
            <person name="del Rey F."/>
            <person name="Benito J."/>
            <person name="Dominguez A."/>
            <person name="Revuelta J.L."/>
            <person name="Moreno S."/>
            <person name="Armstrong J."/>
            <person name="Forsburg S.L."/>
            <person name="Cerutti L."/>
            <person name="Lowe T."/>
            <person name="McCombie W.R."/>
            <person name="Paulsen I."/>
            <person name="Potashkin J."/>
            <person name="Shpakovski G.V."/>
            <person name="Ussery D."/>
            <person name="Barrell B.G."/>
            <person name="Nurse P."/>
        </authorList>
    </citation>
    <scope>NUCLEOTIDE SEQUENCE [LARGE SCALE GENOMIC DNA]</scope>
    <source>
        <strain>972 / ATCC 24843</strain>
    </source>
</reference>
<reference key="3">
    <citation type="journal article" date="1999" name="Genes Dev.">
        <title>Proper metaphase spindle length is determined by centromere proteins Mis12 and Mis6 required for faithful chromosome segregation.</title>
        <authorList>
            <person name="Goshima G."/>
            <person name="Saitoh S."/>
            <person name="Yanagida M."/>
        </authorList>
    </citation>
    <scope>CHARACTERIZATION</scope>
</reference>
<reference key="4">
    <citation type="journal article" date="2000" name="Science">
        <title>Requirement of Mis6 centromere connector for localizing a CENP-A-like protein in fission yeast.</title>
        <authorList>
            <person name="Takahashi K."/>
            <person name="Chen E.S."/>
            <person name="Yanagida M."/>
        </authorList>
    </citation>
    <scope>FUNCTION</scope>
    <scope>INTERACTION WITH CNP1</scope>
</reference>
<reference key="5">
    <citation type="journal article" date="2003" name="J. Cell Biol.">
        <title>Sim4: a novel fission yeast kinetochore protein required for centromeric silencing and chromosome segregation.</title>
        <authorList>
            <person name="Pidoux A.L."/>
            <person name="Richardson W."/>
            <person name="Allshire R.C."/>
        </authorList>
    </citation>
    <scope>INTERACTION WITH SIM4</scope>
</reference>
<reference key="6">
    <citation type="journal article" date="2004" name="Cell">
        <title>Mis16 and Mis18 are required for CENP-A loading and histone deacetylation at centromeres.</title>
        <authorList>
            <person name="Hayashi T."/>
            <person name="Fujita Y."/>
            <person name="Iwasaki O."/>
            <person name="Adachi Y."/>
            <person name="Takahashi K."/>
            <person name="Yanagida M."/>
        </authorList>
    </citation>
    <scope>INTERACTION WITH MIS15 AND MIS17</scope>
</reference>
<reference key="7">
    <citation type="journal article" date="2005" name="EMBO J.">
        <title>Molecular analysis of kinetochore architecture in fission yeast.</title>
        <authorList>
            <person name="Liu X."/>
            <person name="McLeod I."/>
            <person name="Anderson S."/>
            <person name="Yates J.R. III"/>
            <person name="He X."/>
        </authorList>
    </citation>
    <scope>FUNCTION</scope>
    <scope>IDENTIFICATION IN THE SIM4 COMPLEX</scope>
</reference>
<reference key="8">
    <citation type="journal article" date="2006" name="Nat. Biotechnol.">
        <title>ORFeome cloning and global analysis of protein localization in the fission yeast Schizosaccharomyces pombe.</title>
        <authorList>
            <person name="Matsuyama A."/>
            <person name="Arai R."/>
            <person name="Yashiroda Y."/>
            <person name="Shirai A."/>
            <person name="Kamata A."/>
            <person name="Sekido S."/>
            <person name="Kobayashi Y."/>
            <person name="Hashimoto A."/>
            <person name="Hamamoto M."/>
            <person name="Hiraoka Y."/>
            <person name="Horinouchi S."/>
            <person name="Yoshida M."/>
        </authorList>
    </citation>
    <scope>SUBCELLULAR LOCATION [LARGE SCALE ANALYSIS]</scope>
</reference>
<keyword id="KW-0131">Cell cycle</keyword>
<keyword id="KW-0132">Cell division</keyword>
<keyword id="KW-0137">Centromere</keyword>
<keyword id="KW-0158">Chromosome</keyword>
<keyword id="KW-0498">Mitosis</keyword>
<keyword id="KW-0539">Nucleus</keyword>
<keyword id="KW-1185">Reference proteome</keyword>